<dbReference type="EC" id="1.4.4.2" evidence="1"/>
<dbReference type="EMBL" id="CP000685">
    <property type="protein sequence ID" value="ABQ03481.1"/>
    <property type="molecule type" value="Genomic_DNA"/>
</dbReference>
<dbReference type="RefSeq" id="WP_012022537.1">
    <property type="nucleotide sequence ID" value="NC_009441.1"/>
</dbReference>
<dbReference type="SMR" id="A5FMT0"/>
<dbReference type="STRING" id="376686.Fjoh_0445"/>
<dbReference type="KEGG" id="fjo:Fjoh_0445"/>
<dbReference type="eggNOG" id="COG0403">
    <property type="taxonomic scope" value="Bacteria"/>
</dbReference>
<dbReference type="eggNOG" id="COG1003">
    <property type="taxonomic scope" value="Bacteria"/>
</dbReference>
<dbReference type="HOGENOM" id="CLU_004620_3_2_10"/>
<dbReference type="OrthoDB" id="9801272at2"/>
<dbReference type="Proteomes" id="UP000006694">
    <property type="component" value="Chromosome"/>
</dbReference>
<dbReference type="GO" id="GO:0005829">
    <property type="term" value="C:cytosol"/>
    <property type="evidence" value="ECO:0007669"/>
    <property type="project" value="TreeGrafter"/>
</dbReference>
<dbReference type="GO" id="GO:0005960">
    <property type="term" value="C:glycine cleavage complex"/>
    <property type="evidence" value="ECO:0007669"/>
    <property type="project" value="TreeGrafter"/>
</dbReference>
<dbReference type="GO" id="GO:0016594">
    <property type="term" value="F:glycine binding"/>
    <property type="evidence" value="ECO:0007669"/>
    <property type="project" value="TreeGrafter"/>
</dbReference>
<dbReference type="GO" id="GO:0004375">
    <property type="term" value="F:glycine dehydrogenase (decarboxylating) activity"/>
    <property type="evidence" value="ECO:0007669"/>
    <property type="project" value="UniProtKB-EC"/>
</dbReference>
<dbReference type="GO" id="GO:0030170">
    <property type="term" value="F:pyridoxal phosphate binding"/>
    <property type="evidence" value="ECO:0007669"/>
    <property type="project" value="TreeGrafter"/>
</dbReference>
<dbReference type="GO" id="GO:0019464">
    <property type="term" value="P:glycine decarboxylation via glycine cleavage system"/>
    <property type="evidence" value="ECO:0007669"/>
    <property type="project" value="UniProtKB-UniRule"/>
</dbReference>
<dbReference type="CDD" id="cd00613">
    <property type="entry name" value="GDC-P"/>
    <property type="match status" value="2"/>
</dbReference>
<dbReference type="FunFam" id="3.40.640.10:FF:000005">
    <property type="entry name" value="Glycine dehydrogenase (decarboxylating), mitochondrial"/>
    <property type="match status" value="1"/>
</dbReference>
<dbReference type="FunFam" id="3.40.640.10:FF:000007">
    <property type="entry name" value="glycine dehydrogenase (Decarboxylating), mitochondrial"/>
    <property type="match status" value="1"/>
</dbReference>
<dbReference type="Gene3D" id="3.90.1150.10">
    <property type="entry name" value="Aspartate Aminotransferase, domain 1"/>
    <property type="match status" value="2"/>
</dbReference>
<dbReference type="Gene3D" id="3.40.640.10">
    <property type="entry name" value="Type I PLP-dependent aspartate aminotransferase-like (Major domain)"/>
    <property type="match status" value="2"/>
</dbReference>
<dbReference type="HAMAP" id="MF_00711">
    <property type="entry name" value="GcvP"/>
    <property type="match status" value="1"/>
</dbReference>
<dbReference type="InterPro" id="IPR003437">
    <property type="entry name" value="GcvP"/>
</dbReference>
<dbReference type="InterPro" id="IPR049316">
    <property type="entry name" value="GDC-P_C"/>
</dbReference>
<dbReference type="InterPro" id="IPR049315">
    <property type="entry name" value="GDC-P_N"/>
</dbReference>
<dbReference type="InterPro" id="IPR020581">
    <property type="entry name" value="GDC_P"/>
</dbReference>
<dbReference type="InterPro" id="IPR015424">
    <property type="entry name" value="PyrdxlP-dep_Trfase"/>
</dbReference>
<dbReference type="InterPro" id="IPR015421">
    <property type="entry name" value="PyrdxlP-dep_Trfase_major"/>
</dbReference>
<dbReference type="InterPro" id="IPR015422">
    <property type="entry name" value="PyrdxlP-dep_Trfase_small"/>
</dbReference>
<dbReference type="NCBIfam" id="TIGR00461">
    <property type="entry name" value="gcvP"/>
    <property type="match status" value="1"/>
</dbReference>
<dbReference type="NCBIfam" id="NF003346">
    <property type="entry name" value="PRK04366.1"/>
    <property type="match status" value="1"/>
</dbReference>
<dbReference type="PANTHER" id="PTHR11773:SF1">
    <property type="entry name" value="GLYCINE DEHYDROGENASE (DECARBOXYLATING), MITOCHONDRIAL"/>
    <property type="match status" value="1"/>
</dbReference>
<dbReference type="PANTHER" id="PTHR11773">
    <property type="entry name" value="GLYCINE DEHYDROGENASE, DECARBOXYLATING"/>
    <property type="match status" value="1"/>
</dbReference>
<dbReference type="Pfam" id="PF21478">
    <property type="entry name" value="GcvP2_C"/>
    <property type="match status" value="1"/>
</dbReference>
<dbReference type="Pfam" id="PF02347">
    <property type="entry name" value="GDC-P"/>
    <property type="match status" value="2"/>
</dbReference>
<dbReference type="SUPFAM" id="SSF53383">
    <property type="entry name" value="PLP-dependent transferases"/>
    <property type="match status" value="2"/>
</dbReference>
<name>GCSP_FLAJ1</name>
<proteinExistence type="inferred from homology"/>
<accession>A5FMT0</accession>
<reference key="1">
    <citation type="journal article" date="2009" name="Appl. Environ. Microbiol.">
        <title>Novel features of the polysaccharide-digesting gliding bacterium Flavobacterium johnsoniae as revealed by genome sequence analysis.</title>
        <authorList>
            <person name="McBride M.J."/>
            <person name="Xie G."/>
            <person name="Martens E.C."/>
            <person name="Lapidus A."/>
            <person name="Henrissat B."/>
            <person name="Rhodes R.G."/>
            <person name="Goltsman E."/>
            <person name="Wang W."/>
            <person name="Xu J."/>
            <person name="Hunnicutt D.W."/>
            <person name="Staroscik A.M."/>
            <person name="Hoover T.R."/>
            <person name="Cheng Y.Q."/>
            <person name="Stein J.L."/>
        </authorList>
    </citation>
    <scope>NUCLEOTIDE SEQUENCE [LARGE SCALE GENOMIC DNA]</scope>
    <source>
        <strain>ATCC 17061 / DSM 2064 / JCM 8514 / BCRC 14874 / CCUG 350202 / NBRC 14942 / NCIMB 11054 / UW101</strain>
    </source>
</reference>
<gene>
    <name evidence="1" type="primary">gcvP</name>
    <name type="ordered locus">Fjoh_0445</name>
</gene>
<protein>
    <recommendedName>
        <fullName evidence="1">Glycine dehydrogenase (decarboxylating)</fullName>
        <ecNumber evidence="1">1.4.4.2</ecNumber>
    </recommendedName>
    <alternativeName>
        <fullName evidence="1">Glycine cleavage system P-protein</fullName>
    </alternativeName>
    <alternativeName>
        <fullName evidence="1">Glycine decarboxylase</fullName>
    </alternativeName>
    <alternativeName>
        <fullName evidence="1">Glycine dehydrogenase (aminomethyl-transferring)</fullName>
    </alternativeName>
</protein>
<keyword id="KW-0560">Oxidoreductase</keyword>
<keyword id="KW-0663">Pyridoxal phosphate</keyword>
<organism>
    <name type="scientific">Flavobacterium johnsoniae (strain ATCC 17061 / DSM 2064 / JCM 8514 / BCRC 14874 / CCUG 350202 / NBRC 14942 / NCIMB 11054 / UW101)</name>
    <name type="common">Cytophaga johnsonae</name>
    <dbReference type="NCBI Taxonomy" id="376686"/>
    <lineage>
        <taxon>Bacteria</taxon>
        <taxon>Pseudomonadati</taxon>
        <taxon>Bacteroidota</taxon>
        <taxon>Flavobacteriia</taxon>
        <taxon>Flavobacteriales</taxon>
        <taxon>Flavobacteriaceae</taxon>
        <taxon>Flavobacterium</taxon>
    </lineage>
</organism>
<sequence length="949" mass="103684">MKTDAFALRHIGPRETDLQHMLQTIGVDSIEQLVYETLPDDIRLKAPLNLDPAMTEYEFANHIQELGKKNKVFKSYIGLGYHPTIVPAPIQRNIFENPGWYTAYTPYQAEIAQGRLEAILNFQTTVIELTGMEIANASLLDEGTAAAEAMALLFDVRTRDQKKNNTHKFFVSEEILPQTLSVLQTRSTPIGIELVVGNHETFDFSTEFFGAILQYPGKYGQVNDYGAFVAKAKENEIKVAFAADILSLAALTSPGEMGAAVVVGTTQRFGVPMGYGGPHAAYFATKDEYKRSMPGRIIGVSVDANGNRALRMALGTREQHIKREKATSNICTAQVLLAVMAGMYAVYHGPKGLKYIANKVHASAVTTAEALNKLGVFQTNTAFFDTILVKADAQKVKAIAEKNEVNFFYPDAESVSISLNETTSVSDINQIIAIFAEALGKEAVTVSELTTASQLPASLERTSSFLTHDVFNNHHSESQLMRYIKKLERKDLSLNHSMISLGSCTMKLNAASEMLPLSMPNWNSIHPFAPVEQAEGYITMLKKLEQQLNVITGFAGTTLQPNSGAQGEYAGLMAIRAYHLSRNEGHRNVCLIPSSAHGTNPASAAMAGMKIIVTKTTPEGNIDVEDLREKAIEHKDDLSCLMVTYPSTHGVFESSIIEITKLIHENGGLVYMDGANMNAQVGLTNPATIGADVCHLNLHKTFAIPHGGGGPGVGPICVNEKLVPFLPTNPILKVGGEQAITAISSAPYGSALVCLISYGYITMMGAEGLKSATEHAILNANYMKSRFEGHYPILYTGECGRAAHEMILDCRAFKENGIEVGDIAKRLMDYGFHAPTVSFPVAGTLMIEPTESEDLAELDRFCDALISIRKEIEAATADDKNNVLKNAPHTLAMLTSDSWDFPYSREKAAYPLEYIADNKFWPSVRRVDDAYGDRNLVCSCAPIEAYMEN</sequence>
<comment type="function">
    <text evidence="1">The glycine cleavage system catalyzes the degradation of glycine. The P protein binds the alpha-amino group of glycine through its pyridoxal phosphate cofactor; CO(2) is released and the remaining methylamine moiety is then transferred to the lipoamide cofactor of the H protein.</text>
</comment>
<comment type="catalytic activity">
    <reaction evidence="1">
        <text>N(6)-[(R)-lipoyl]-L-lysyl-[glycine-cleavage complex H protein] + glycine + H(+) = N(6)-[(R)-S(8)-aminomethyldihydrolipoyl]-L-lysyl-[glycine-cleavage complex H protein] + CO2</text>
        <dbReference type="Rhea" id="RHEA:24304"/>
        <dbReference type="Rhea" id="RHEA-COMP:10494"/>
        <dbReference type="Rhea" id="RHEA-COMP:10495"/>
        <dbReference type="ChEBI" id="CHEBI:15378"/>
        <dbReference type="ChEBI" id="CHEBI:16526"/>
        <dbReference type="ChEBI" id="CHEBI:57305"/>
        <dbReference type="ChEBI" id="CHEBI:83099"/>
        <dbReference type="ChEBI" id="CHEBI:83143"/>
        <dbReference type="EC" id="1.4.4.2"/>
    </reaction>
</comment>
<comment type="cofactor">
    <cofactor evidence="1">
        <name>pyridoxal 5'-phosphate</name>
        <dbReference type="ChEBI" id="CHEBI:597326"/>
    </cofactor>
</comment>
<comment type="subunit">
    <text evidence="1">The glycine cleavage system is composed of four proteins: P, T, L and H.</text>
</comment>
<comment type="similarity">
    <text evidence="1">Belongs to the GcvP family.</text>
</comment>
<feature type="chain" id="PRO_1000083207" description="Glycine dehydrogenase (decarboxylating)">
    <location>
        <begin position="1"/>
        <end position="949"/>
    </location>
</feature>
<feature type="modified residue" description="N6-(pyridoxal phosphate)lysine" evidence="1">
    <location>
        <position position="700"/>
    </location>
</feature>
<evidence type="ECO:0000255" key="1">
    <source>
        <dbReference type="HAMAP-Rule" id="MF_00711"/>
    </source>
</evidence>